<reference key="1">
    <citation type="submission" date="2007-05" db="EMBL/GenBank/DDBJ databases">
        <title>Complete sequence of Geobacter uraniireducens Rf4.</title>
        <authorList>
            <consortium name="US DOE Joint Genome Institute"/>
            <person name="Copeland A."/>
            <person name="Lucas S."/>
            <person name="Lapidus A."/>
            <person name="Barry K."/>
            <person name="Detter J.C."/>
            <person name="Glavina del Rio T."/>
            <person name="Hammon N."/>
            <person name="Israni S."/>
            <person name="Dalin E."/>
            <person name="Tice H."/>
            <person name="Pitluck S."/>
            <person name="Chertkov O."/>
            <person name="Brettin T."/>
            <person name="Bruce D."/>
            <person name="Han C."/>
            <person name="Schmutz J."/>
            <person name="Larimer F."/>
            <person name="Land M."/>
            <person name="Hauser L."/>
            <person name="Kyrpides N."/>
            <person name="Mikhailova N."/>
            <person name="Shelobolina E."/>
            <person name="Aklujkar M."/>
            <person name="Lovley D."/>
            <person name="Richardson P."/>
        </authorList>
    </citation>
    <scope>NUCLEOTIDE SEQUENCE [LARGE SCALE GENOMIC DNA]</scope>
    <source>
        <strain>ATCC BAA-1134 / JCM 13001 / Rf4</strain>
    </source>
</reference>
<comment type="function">
    <text evidence="1">Catalyzes the formation of S-adenosylmethionine (AdoMet) from methionine and ATP. The overall synthetic reaction is composed of two sequential steps, AdoMet formation and the subsequent tripolyphosphate hydrolysis which occurs prior to release of AdoMet from the enzyme.</text>
</comment>
<comment type="catalytic activity">
    <reaction evidence="1">
        <text>L-methionine + ATP + H2O = S-adenosyl-L-methionine + phosphate + diphosphate</text>
        <dbReference type="Rhea" id="RHEA:21080"/>
        <dbReference type="ChEBI" id="CHEBI:15377"/>
        <dbReference type="ChEBI" id="CHEBI:30616"/>
        <dbReference type="ChEBI" id="CHEBI:33019"/>
        <dbReference type="ChEBI" id="CHEBI:43474"/>
        <dbReference type="ChEBI" id="CHEBI:57844"/>
        <dbReference type="ChEBI" id="CHEBI:59789"/>
        <dbReference type="EC" id="2.5.1.6"/>
    </reaction>
</comment>
<comment type="cofactor">
    <cofactor evidence="1">
        <name>Mg(2+)</name>
        <dbReference type="ChEBI" id="CHEBI:18420"/>
    </cofactor>
    <text evidence="1">Binds 2 divalent ions per subunit.</text>
</comment>
<comment type="cofactor">
    <cofactor evidence="1">
        <name>K(+)</name>
        <dbReference type="ChEBI" id="CHEBI:29103"/>
    </cofactor>
    <text evidence="1">Binds 1 potassium ion per subunit.</text>
</comment>
<comment type="pathway">
    <text evidence="1">Amino-acid biosynthesis; S-adenosyl-L-methionine biosynthesis; S-adenosyl-L-methionine from L-methionine: step 1/1.</text>
</comment>
<comment type="subunit">
    <text evidence="1">Homotetramer; dimer of dimers.</text>
</comment>
<comment type="subcellular location">
    <subcellularLocation>
        <location evidence="1">Cytoplasm</location>
    </subcellularLocation>
</comment>
<comment type="similarity">
    <text evidence="1">Belongs to the AdoMet synthase family.</text>
</comment>
<feature type="chain" id="PRO_1000075377" description="S-adenosylmethionine synthase">
    <location>
        <begin position="1"/>
        <end position="389"/>
    </location>
</feature>
<feature type="region of interest" description="Flexible loop" evidence="1">
    <location>
        <begin position="101"/>
        <end position="111"/>
    </location>
</feature>
<feature type="binding site" description="in other chain" evidence="1">
    <location>
        <position position="17"/>
    </location>
    <ligand>
        <name>ATP</name>
        <dbReference type="ChEBI" id="CHEBI:30616"/>
        <note>ligand shared between two neighboring subunits</note>
    </ligand>
</feature>
<feature type="binding site" evidence="1">
    <location>
        <position position="19"/>
    </location>
    <ligand>
        <name>Mg(2+)</name>
        <dbReference type="ChEBI" id="CHEBI:18420"/>
    </ligand>
</feature>
<feature type="binding site" evidence="1">
    <location>
        <position position="45"/>
    </location>
    <ligand>
        <name>K(+)</name>
        <dbReference type="ChEBI" id="CHEBI:29103"/>
    </ligand>
</feature>
<feature type="binding site" description="in other chain" evidence="1">
    <location>
        <position position="58"/>
    </location>
    <ligand>
        <name>L-methionine</name>
        <dbReference type="ChEBI" id="CHEBI:57844"/>
        <note>ligand shared between two neighboring subunits</note>
    </ligand>
</feature>
<feature type="binding site" description="in other chain" evidence="1">
    <location>
        <position position="101"/>
    </location>
    <ligand>
        <name>L-methionine</name>
        <dbReference type="ChEBI" id="CHEBI:57844"/>
        <note>ligand shared between two neighboring subunits</note>
    </ligand>
</feature>
<feature type="binding site" description="in other chain" evidence="1">
    <location>
        <begin position="168"/>
        <end position="170"/>
    </location>
    <ligand>
        <name>ATP</name>
        <dbReference type="ChEBI" id="CHEBI:30616"/>
        <note>ligand shared between two neighboring subunits</note>
    </ligand>
</feature>
<feature type="binding site" description="in other chain" evidence="1">
    <location>
        <begin position="234"/>
        <end position="235"/>
    </location>
    <ligand>
        <name>ATP</name>
        <dbReference type="ChEBI" id="CHEBI:30616"/>
        <note>ligand shared between two neighboring subunits</note>
    </ligand>
</feature>
<feature type="binding site" evidence="1">
    <location>
        <position position="243"/>
    </location>
    <ligand>
        <name>ATP</name>
        <dbReference type="ChEBI" id="CHEBI:30616"/>
        <note>ligand shared between two neighboring subunits</note>
    </ligand>
</feature>
<feature type="binding site" evidence="1">
    <location>
        <position position="243"/>
    </location>
    <ligand>
        <name>L-methionine</name>
        <dbReference type="ChEBI" id="CHEBI:57844"/>
        <note>ligand shared between two neighboring subunits</note>
    </ligand>
</feature>
<feature type="binding site" description="in other chain" evidence="1">
    <location>
        <begin position="249"/>
        <end position="250"/>
    </location>
    <ligand>
        <name>ATP</name>
        <dbReference type="ChEBI" id="CHEBI:30616"/>
        <note>ligand shared between two neighboring subunits</note>
    </ligand>
</feature>
<feature type="binding site" evidence="1">
    <location>
        <position position="266"/>
    </location>
    <ligand>
        <name>ATP</name>
        <dbReference type="ChEBI" id="CHEBI:30616"/>
        <note>ligand shared between two neighboring subunits</note>
    </ligand>
</feature>
<feature type="binding site" evidence="1">
    <location>
        <position position="270"/>
    </location>
    <ligand>
        <name>ATP</name>
        <dbReference type="ChEBI" id="CHEBI:30616"/>
        <note>ligand shared between two neighboring subunits</note>
    </ligand>
</feature>
<feature type="binding site" description="in other chain" evidence="1">
    <location>
        <position position="274"/>
    </location>
    <ligand>
        <name>L-methionine</name>
        <dbReference type="ChEBI" id="CHEBI:57844"/>
        <note>ligand shared between two neighboring subunits</note>
    </ligand>
</feature>
<accession>A5GA66</accession>
<protein>
    <recommendedName>
        <fullName evidence="1">S-adenosylmethionine synthase</fullName>
        <shortName evidence="1">AdoMet synthase</shortName>
        <ecNumber evidence="1">2.5.1.6</ecNumber>
    </recommendedName>
    <alternativeName>
        <fullName evidence="1">MAT</fullName>
    </alternativeName>
    <alternativeName>
        <fullName evidence="1">Methionine adenosyltransferase</fullName>
    </alternativeName>
</protein>
<evidence type="ECO:0000255" key="1">
    <source>
        <dbReference type="HAMAP-Rule" id="MF_00086"/>
    </source>
</evidence>
<name>METK_GEOUR</name>
<organism>
    <name type="scientific">Geotalea uraniireducens (strain Rf4)</name>
    <name type="common">Geobacter uraniireducens</name>
    <dbReference type="NCBI Taxonomy" id="351605"/>
    <lineage>
        <taxon>Bacteria</taxon>
        <taxon>Pseudomonadati</taxon>
        <taxon>Thermodesulfobacteriota</taxon>
        <taxon>Desulfuromonadia</taxon>
        <taxon>Geobacterales</taxon>
        <taxon>Geobacteraceae</taxon>
        <taxon>Geotalea</taxon>
    </lineage>
</organism>
<sequence>MEMKDFIFTSESVSEGHPDKVADQVSDAILDAILTQDPKSRVACETLVTTGMTVVAGEITTNAIVDYPKIVRETIKEIGYNDSAMGFDWETCAVLTSIDKQSPDIAQGVTEGEGLFKEQGAGDQGLMFGYACNETPELMPMSILLSHKLVKKLADVRKSGVLDFLRPDSKSQVSIQYINDRPVHVDTVVISSQHTPEVSYETIKEGIIEEVVKKIIPEELMDAKTRFLINPTGRFVIGGPMGDCGLTGRKIIVDSYGGHGAHGGGAFSGKDPSKVDRSAAYMGRYVAKNLVAAGLCEKCEVQVAYAIGVAEPVSVMVDTSGTGKIPSARIAQIVREVFDLRPRAIIEQLDLLRPIYKKTAAYGHFGRELPEFTWERTDKVSIIREKAGI</sequence>
<keyword id="KW-0067">ATP-binding</keyword>
<keyword id="KW-0963">Cytoplasm</keyword>
<keyword id="KW-0460">Magnesium</keyword>
<keyword id="KW-0479">Metal-binding</keyword>
<keyword id="KW-0547">Nucleotide-binding</keyword>
<keyword id="KW-0554">One-carbon metabolism</keyword>
<keyword id="KW-0630">Potassium</keyword>
<keyword id="KW-1185">Reference proteome</keyword>
<keyword id="KW-0808">Transferase</keyword>
<proteinExistence type="inferred from homology"/>
<gene>
    <name evidence="1" type="primary">metK</name>
    <name type="ordered locus">Gura_1332</name>
</gene>
<dbReference type="EC" id="2.5.1.6" evidence="1"/>
<dbReference type="EMBL" id="CP000698">
    <property type="protein sequence ID" value="ABQ25533.1"/>
    <property type="molecule type" value="Genomic_DNA"/>
</dbReference>
<dbReference type="RefSeq" id="WP_011938251.1">
    <property type="nucleotide sequence ID" value="NC_009483.1"/>
</dbReference>
<dbReference type="SMR" id="A5GA66"/>
<dbReference type="STRING" id="351605.Gura_1332"/>
<dbReference type="KEGG" id="gur:Gura_1332"/>
<dbReference type="HOGENOM" id="CLU_041802_1_1_7"/>
<dbReference type="OrthoDB" id="9801686at2"/>
<dbReference type="UniPathway" id="UPA00315">
    <property type="reaction ID" value="UER00080"/>
</dbReference>
<dbReference type="Proteomes" id="UP000006695">
    <property type="component" value="Chromosome"/>
</dbReference>
<dbReference type="GO" id="GO:0005737">
    <property type="term" value="C:cytoplasm"/>
    <property type="evidence" value="ECO:0007669"/>
    <property type="project" value="UniProtKB-SubCell"/>
</dbReference>
<dbReference type="GO" id="GO:0005524">
    <property type="term" value="F:ATP binding"/>
    <property type="evidence" value="ECO:0007669"/>
    <property type="project" value="UniProtKB-UniRule"/>
</dbReference>
<dbReference type="GO" id="GO:0000287">
    <property type="term" value="F:magnesium ion binding"/>
    <property type="evidence" value="ECO:0007669"/>
    <property type="project" value="UniProtKB-UniRule"/>
</dbReference>
<dbReference type="GO" id="GO:0004478">
    <property type="term" value="F:methionine adenosyltransferase activity"/>
    <property type="evidence" value="ECO:0007669"/>
    <property type="project" value="UniProtKB-UniRule"/>
</dbReference>
<dbReference type="GO" id="GO:0006730">
    <property type="term" value="P:one-carbon metabolic process"/>
    <property type="evidence" value="ECO:0007669"/>
    <property type="project" value="UniProtKB-KW"/>
</dbReference>
<dbReference type="GO" id="GO:0006556">
    <property type="term" value="P:S-adenosylmethionine biosynthetic process"/>
    <property type="evidence" value="ECO:0007669"/>
    <property type="project" value="UniProtKB-UniRule"/>
</dbReference>
<dbReference type="CDD" id="cd18079">
    <property type="entry name" value="S-AdoMet_synt"/>
    <property type="match status" value="1"/>
</dbReference>
<dbReference type="FunFam" id="3.30.300.10:FF:000001">
    <property type="entry name" value="S-adenosylmethionine synthase"/>
    <property type="match status" value="1"/>
</dbReference>
<dbReference type="FunFam" id="3.30.300.10:FF:000003">
    <property type="entry name" value="S-adenosylmethionine synthase"/>
    <property type="match status" value="1"/>
</dbReference>
<dbReference type="FunFam" id="3.30.300.10:FF:000004">
    <property type="entry name" value="S-adenosylmethionine synthase"/>
    <property type="match status" value="1"/>
</dbReference>
<dbReference type="Gene3D" id="3.30.300.10">
    <property type="match status" value="3"/>
</dbReference>
<dbReference type="HAMAP" id="MF_00086">
    <property type="entry name" value="S_AdoMet_synth1"/>
    <property type="match status" value="1"/>
</dbReference>
<dbReference type="InterPro" id="IPR022631">
    <property type="entry name" value="ADOMET_SYNTHASE_CS"/>
</dbReference>
<dbReference type="InterPro" id="IPR022630">
    <property type="entry name" value="S-AdoMet_synt_C"/>
</dbReference>
<dbReference type="InterPro" id="IPR022629">
    <property type="entry name" value="S-AdoMet_synt_central"/>
</dbReference>
<dbReference type="InterPro" id="IPR022628">
    <property type="entry name" value="S-AdoMet_synt_N"/>
</dbReference>
<dbReference type="InterPro" id="IPR002133">
    <property type="entry name" value="S-AdoMet_synthetase"/>
</dbReference>
<dbReference type="InterPro" id="IPR022636">
    <property type="entry name" value="S-AdoMet_synthetase_sfam"/>
</dbReference>
<dbReference type="NCBIfam" id="TIGR01034">
    <property type="entry name" value="metK"/>
    <property type="match status" value="1"/>
</dbReference>
<dbReference type="PANTHER" id="PTHR11964">
    <property type="entry name" value="S-ADENOSYLMETHIONINE SYNTHETASE"/>
    <property type="match status" value="1"/>
</dbReference>
<dbReference type="Pfam" id="PF02773">
    <property type="entry name" value="S-AdoMet_synt_C"/>
    <property type="match status" value="1"/>
</dbReference>
<dbReference type="Pfam" id="PF02772">
    <property type="entry name" value="S-AdoMet_synt_M"/>
    <property type="match status" value="1"/>
</dbReference>
<dbReference type="Pfam" id="PF00438">
    <property type="entry name" value="S-AdoMet_synt_N"/>
    <property type="match status" value="1"/>
</dbReference>
<dbReference type="PIRSF" id="PIRSF000497">
    <property type="entry name" value="MAT"/>
    <property type="match status" value="1"/>
</dbReference>
<dbReference type="SUPFAM" id="SSF55973">
    <property type="entry name" value="S-adenosylmethionine synthetase"/>
    <property type="match status" value="3"/>
</dbReference>
<dbReference type="PROSITE" id="PS00376">
    <property type="entry name" value="ADOMET_SYNTHASE_1"/>
    <property type="match status" value="1"/>
</dbReference>
<dbReference type="PROSITE" id="PS00377">
    <property type="entry name" value="ADOMET_SYNTHASE_2"/>
    <property type="match status" value="1"/>
</dbReference>